<dbReference type="GO" id="GO:0005576">
    <property type="term" value="C:extracellular region"/>
    <property type="evidence" value="ECO:0007669"/>
    <property type="project" value="UniProtKB-SubCell"/>
</dbReference>
<dbReference type="GO" id="GO:0099106">
    <property type="term" value="F:ion channel regulator activity"/>
    <property type="evidence" value="ECO:0007669"/>
    <property type="project" value="UniProtKB-KW"/>
</dbReference>
<dbReference type="GO" id="GO:0090729">
    <property type="term" value="F:toxin activity"/>
    <property type="evidence" value="ECO:0007669"/>
    <property type="project" value="UniProtKB-KW"/>
</dbReference>
<name>CM746_CONIN</name>
<comment type="function">
    <text evidence="1 5">Probable neurotoxin with unknown target (Probable). Possibly targets ion channels (Probable). In vivo, intraperitoneal injection into fish provokes paralysis after 5 minutes (By similarity).</text>
</comment>
<comment type="subcellular location">
    <subcellularLocation>
        <location evidence="3">Secreted</location>
    </subcellularLocation>
</comment>
<comment type="tissue specificity">
    <text evidence="6">Expressed by the venom duct.</text>
</comment>
<comment type="domain">
    <text evidence="5">The cysteine framework is III (CC-C-C-CC). Classified in the M-2 branch, since 2 residues stand between the fourth and the fifth cysteine residues.</text>
</comment>
<comment type="mass spectrometry" mass="1746.5" method="MALDI" evidence="3"/>
<comment type="mass spectrometry" mass="1761.6" method="MALDI" evidence="3">
    <text>hydroxylation at Pro-5 (in In1762).</text>
</comment>
<comment type="similarity">
    <text evidence="5">Belongs to the conotoxin M superfamily.</text>
</comment>
<proteinExistence type="evidence at protein level"/>
<reference key="1">
    <citation type="journal article" date="2021" name="Saudi J. Biol. Sci.">
        <title>Mass spectrometric identification and denovo sequencing of novel conotoxins from vermivorous cone snail (Conus inscriptus), and preliminary screening of its venom for biological activities in vitro and in vivo.</title>
        <authorList>
            <person name="Jain R.P."/>
            <person name="Jayaseelan B.F."/>
            <person name="Wilson Alphonse C.R."/>
            <person name="Mahmoud A.H."/>
            <person name="Mohammed O.B."/>
            <person name="Ahmed Almunqedhi B.M."/>
            <person name="Rajaian Pushpabai R."/>
        </authorList>
    </citation>
    <scope>PROTEIN SEQUENCE</scope>
    <scope>SUBCELLULAR LOCATION</scope>
    <scope>MASS SPECTROMETRY</scope>
    <scope>HYDROXYLATION AT PRO-5</scope>
    <scope>AMIDATION AT TYR-15</scope>
    <source>
        <tissue>Venom</tissue>
    </source>
</reference>
<organism>
    <name type="scientific">Conus inscriptus</name>
    <name type="common">Engraved cone</name>
    <dbReference type="NCBI Taxonomy" id="257329"/>
    <lineage>
        <taxon>Eukaryota</taxon>
        <taxon>Metazoa</taxon>
        <taxon>Spiralia</taxon>
        <taxon>Lophotrochozoa</taxon>
        <taxon>Mollusca</taxon>
        <taxon>Gastropoda</taxon>
        <taxon>Caenogastropoda</taxon>
        <taxon>Neogastropoda</taxon>
        <taxon>Conoidea</taxon>
        <taxon>Conidae</taxon>
        <taxon>Conus</taxon>
        <taxon>Phasmoconus</taxon>
    </lineage>
</organism>
<protein>
    <recommendedName>
        <fullName evidence="4">Conotoxin In1746</fullName>
    </recommendedName>
    <alternativeName>
        <fullName evidence="4">Conotoxin In1762</fullName>
    </alternativeName>
</protein>
<keyword id="KW-0027">Amidation</keyword>
<keyword id="KW-0903">Direct protein sequencing</keyword>
<keyword id="KW-1015">Disulfide bond</keyword>
<keyword id="KW-0379">Hydroxylation</keyword>
<keyword id="KW-0872">Ion channel impairing toxin</keyword>
<keyword id="KW-0528">Neurotoxin</keyword>
<keyword id="KW-0964">Secreted</keyword>
<keyword id="KW-0800">Toxin</keyword>
<sequence length="15" mass="1754">CCEWPCHHGCIPCCY</sequence>
<evidence type="ECO:0000250" key="1">
    <source>
        <dbReference type="UniProtKB" id="P0CH15"/>
    </source>
</evidence>
<evidence type="ECO:0000250" key="2">
    <source>
        <dbReference type="UniProtKB" id="P0CI24"/>
    </source>
</evidence>
<evidence type="ECO:0000269" key="3">
    <source>
    </source>
</evidence>
<evidence type="ECO:0000303" key="4">
    <source>
    </source>
</evidence>
<evidence type="ECO:0000305" key="5"/>
<evidence type="ECO:0000305" key="6">
    <source>
    </source>
</evidence>
<accession>P0DUR4</accession>
<feature type="peptide" id="PRO_0000453226" description="Conotoxin In1746" evidence="3">
    <location>
        <begin position="1"/>
        <end position="15"/>
    </location>
</feature>
<feature type="modified residue" description="4-hydroxyproline; partial; in In1762" evidence="3">
    <location>
        <position position="5"/>
    </location>
</feature>
<feature type="modified residue" description="Tyrosine amide" evidence="3">
    <location>
        <position position="15"/>
    </location>
</feature>
<feature type="disulfide bond" evidence="2">
    <location>
        <begin position="1"/>
        <end position="14"/>
    </location>
</feature>
<feature type="disulfide bond" evidence="2">
    <location>
        <begin position="2"/>
        <end position="10"/>
    </location>
</feature>
<feature type="disulfide bond" evidence="2">
    <location>
        <begin position="6"/>
        <end position="13"/>
    </location>
</feature>